<organism>
    <name type="scientific">Canis lupus familiaris</name>
    <name type="common">Dog</name>
    <name type="synonym">Canis familiaris</name>
    <dbReference type="NCBI Taxonomy" id="9615"/>
    <lineage>
        <taxon>Eukaryota</taxon>
        <taxon>Metazoa</taxon>
        <taxon>Chordata</taxon>
        <taxon>Craniata</taxon>
        <taxon>Vertebrata</taxon>
        <taxon>Euteleostomi</taxon>
        <taxon>Mammalia</taxon>
        <taxon>Eutheria</taxon>
        <taxon>Laurasiatheria</taxon>
        <taxon>Carnivora</taxon>
        <taxon>Caniformia</taxon>
        <taxon>Canidae</taxon>
        <taxon>Canis</taxon>
    </lineage>
</organism>
<reference key="1">
    <citation type="journal article" date="1995" name="Exp. Eye Res.">
        <title>Canine homolog and exclusion of retinal degeneration slow (rds) as the gene for early retinal degeneration (erd) in the dog.</title>
        <authorList>
            <person name="Moghrabi W.N."/>
            <person name="Kedzierski W."/>
            <person name="Travis G.H."/>
        </authorList>
    </citation>
    <scope>NUCLEOTIDE SEQUENCE [MRNA]</scope>
    <source>
        <tissue>Retina</tissue>
    </source>
</reference>
<reference key="2">
    <citation type="journal article" date="1996" name="Invest. Ophthalmol. Vis. Sci.">
        <title>Nonallelism of erd and prcd and exclusion of the canine RDS/peripherin gene as a candidate for both retinal degeneration loci.</title>
        <authorList>
            <person name="Ray K."/>
            <person name="Acland G.M."/>
            <person name="Aguirre G.D."/>
        </authorList>
    </citation>
    <scope>NUCLEOTIDE SEQUENCE [MRNA]</scope>
    <source>
        <tissue>Retina</tissue>
    </source>
</reference>
<reference key="3">
    <citation type="submission" date="1995-12" db="EMBL/GenBank/DDBJ databases">
        <title>Canine peripherin/RDS complete cDNA sequence, polymorphisms and exclusion as a candidate gene for progressive retinal atrophy in nn breeds.</title>
        <authorList>
            <person name="Petersen-Jones S.M."/>
            <person name="Sargan D.R."/>
        </authorList>
    </citation>
    <scope>NUCLEOTIDE SEQUENCE [MRNA]</scope>
    <source>
        <tissue>Retina</tissue>
    </source>
</reference>
<reference key="4">
    <citation type="journal article" date="2000" name="Anim. Genet.">
        <title>Evaluation of RDS/Peripherin and ROM1 as candidate genes in generalised progressive retinal atrophy and exclusion of digenic inheritance.</title>
        <authorList>
            <person name="Runte M."/>
            <person name="Dekomien G."/>
            <person name="Epplen J.T."/>
        </authorList>
    </citation>
    <scope>NUCLEOTIDE SEQUENCE [GENOMIC DNA]</scope>
    <scope>VARIANT THR-339</scope>
</reference>
<accession>P52204</accession>
<accession>Q95NE3</accession>
<feature type="chain" id="PRO_0000168103" description="Peripherin-2">
    <location>
        <begin position="1"/>
        <end position="346"/>
    </location>
</feature>
<feature type="topological domain" description="Cytoplasmic" evidence="4">
    <location>
        <begin position="1"/>
        <end position="24"/>
    </location>
</feature>
<feature type="transmembrane region" description="Helical" evidence="4">
    <location>
        <begin position="25"/>
        <end position="43"/>
    </location>
</feature>
<feature type="topological domain" description="Lumenal" evidence="4">
    <location>
        <begin position="44"/>
        <end position="61"/>
    </location>
</feature>
<feature type="transmembrane region" description="Helical" evidence="4">
    <location>
        <begin position="62"/>
        <end position="80"/>
    </location>
</feature>
<feature type="topological domain" description="Cytoplasmic" evidence="4">
    <location>
        <begin position="81"/>
        <end position="99"/>
    </location>
</feature>
<feature type="transmembrane region" description="Helical" evidence="4">
    <location>
        <begin position="100"/>
        <end position="123"/>
    </location>
</feature>
<feature type="topological domain" description="Lumenal" evidence="4">
    <location>
        <begin position="124"/>
        <end position="264"/>
    </location>
</feature>
<feature type="transmembrane region" description="Helical" evidence="4">
    <location>
        <begin position="265"/>
        <end position="290"/>
    </location>
</feature>
<feature type="topological domain" description="Cytoplasmic" evidence="4">
    <location>
        <begin position="291"/>
        <end position="346"/>
    </location>
</feature>
<feature type="region of interest" description="Interaction with MREG" evidence="1">
    <location>
        <begin position="341"/>
        <end position="346"/>
    </location>
</feature>
<feature type="glycosylation site" description="N-linked (GlcNAc...) asparagine" evidence="4">
    <location>
        <position position="53"/>
    </location>
</feature>
<feature type="glycosylation site" description="N-linked (GlcNAc...) asparagine" evidence="4">
    <location>
        <position position="229"/>
    </location>
</feature>
<feature type="disulfide bond" description="Interchain (with ROM1)" evidence="2">
    <location>
        <position position="150"/>
    </location>
</feature>
<feature type="sequence variant" evidence="5">
    <original>A</original>
    <variation>T</variation>
    <location>
        <position position="339"/>
    </location>
</feature>
<feature type="sequence conflict" description="In Ref. 2 and 4." evidence="6" ref="2 4">
    <original>F</original>
    <variation>L</variation>
    <location>
        <position position="319"/>
    </location>
</feature>
<name>PRPH2_CANLF</name>
<sequence>MALLKVKFDQKKRVKLAQGLWLMNWLSVLAGIVIFSLGLFLKIELRKRSDVMNNSESHFVPNSLIVMGVLSCVFNSLAGKICYDALDPAKYAKWKPWLKPYLAVCVLFNIALFLVTLCCFLMRGSLESTLAHGLKNGMKYYRDTDTPGRCFMKKTIDMLQIEFRCCGNNGFRDWFEIQWISNRYLDFSSKEVKDRIKSNVDGRYLVDGVPFSCCNPSSPRPCIQYQLTNNSAHYSYDHQTEELNLWVNGCRAALLSYYSSLMNSMGAVTLLVWLFEVTITIGLRYLHTALEGVSNPEDPECESEGWLLEKSVSETWKAFLESLKKLGKSNQVEAEGADAGQAPEAG</sequence>
<dbReference type="EMBL" id="U36577">
    <property type="protein sequence ID" value="AAB08751.1"/>
    <property type="molecule type" value="mRNA"/>
</dbReference>
<dbReference type="EMBL" id="U27349">
    <property type="protein sequence ID" value="AAB01510.1"/>
    <property type="molecule type" value="mRNA"/>
</dbReference>
<dbReference type="EMBL" id="X94122">
    <property type="protein sequence ID" value="CAA63842.1"/>
    <property type="molecule type" value="mRNA"/>
</dbReference>
<dbReference type="EMBL" id="AJ249964">
    <property type="protein sequence ID" value="CAB57832.1"/>
    <property type="molecule type" value="Genomic_DNA"/>
</dbReference>
<dbReference type="EMBL" id="AJ249965">
    <property type="protein sequence ID" value="CAB57832.1"/>
    <property type="status" value="JOINED"/>
    <property type="molecule type" value="Genomic_DNA"/>
</dbReference>
<dbReference type="RefSeq" id="NP_001003289.1">
    <property type="nucleotide sequence ID" value="NM_001003289.1"/>
</dbReference>
<dbReference type="SMR" id="P52204"/>
<dbReference type="FunCoup" id="P52204">
    <property type="interactions" value="30"/>
</dbReference>
<dbReference type="STRING" id="9615.ENSCAFP00000002506"/>
<dbReference type="GlyCosmos" id="P52204">
    <property type="glycosylation" value="2 sites, No reported glycans"/>
</dbReference>
<dbReference type="PaxDb" id="9612-ENSCAFP00000002506"/>
<dbReference type="Ensembl" id="ENSCAFT00000002698.2">
    <property type="protein sequence ID" value="ENSCAFP00000002506.1"/>
    <property type="gene ID" value="ENSCAFG00000001722.3"/>
</dbReference>
<dbReference type="Ensembl" id="ENSCAFT00030027156.1">
    <property type="protein sequence ID" value="ENSCAFP00030023702.1"/>
    <property type="gene ID" value="ENSCAFG00030014715.1"/>
</dbReference>
<dbReference type="Ensembl" id="ENSCAFT00040012417.1">
    <property type="protein sequence ID" value="ENSCAFP00040010764.1"/>
    <property type="gene ID" value="ENSCAFG00040006679.1"/>
</dbReference>
<dbReference type="Ensembl" id="ENSCAFT00845011657.1">
    <property type="protein sequence ID" value="ENSCAFP00845009098.1"/>
    <property type="gene ID" value="ENSCAFG00845006562.1"/>
</dbReference>
<dbReference type="GeneID" id="403972"/>
<dbReference type="KEGG" id="cfa:403972"/>
<dbReference type="CTD" id="5961"/>
<dbReference type="VEuPathDB" id="HostDB:ENSCAFG00845006562"/>
<dbReference type="VGNC" id="VGNC:45032">
    <property type="gene designation" value="PRPH2"/>
</dbReference>
<dbReference type="eggNOG" id="KOG3882">
    <property type="taxonomic scope" value="Eukaryota"/>
</dbReference>
<dbReference type="GeneTree" id="ENSGT00940000157303"/>
<dbReference type="HOGENOM" id="CLU_068903_0_0_1"/>
<dbReference type="InParanoid" id="P52204"/>
<dbReference type="OMA" id="LCCFLMR"/>
<dbReference type="OrthoDB" id="9836210at2759"/>
<dbReference type="TreeFam" id="TF331684"/>
<dbReference type="Proteomes" id="UP000002254">
    <property type="component" value="Chromosome 12"/>
</dbReference>
<dbReference type="Proteomes" id="UP000694429">
    <property type="component" value="Chromosome 12"/>
</dbReference>
<dbReference type="Proteomes" id="UP000694542">
    <property type="component" value="Chromosome 12"/>
</dbReference>
<dbReference type="Proteomes" id="UP000805418">
    <property type="component" value="Chromosome 12"/>
</dbReference>
<dbReference type="Bgee" id="ENSCAFG00000001722">
    <property type="expression patterns" value="Expressed in bone marrow and 8 other cell types or tissues"/>
</dbReference>
<dbReference type="GO" id="GO:0001917">
    <property type="term" value="C:photoreceptor inner segment"/>
    <property type="evidence" value="ECO:0007669"/>
    <property type="project" value="UniProtKB-SubCell"/>
</dbReference>
<dbReference type="GO" id="GO:0001750">
    <property type="term" value="C:photoreceptor outer segment"/>
    <property type="evidence" value="ECO:0007669"/>
    <property type="project" value="UniProtKB-SubCell"/>
</dbReference>
<dbReference type="GO" id="GO:0005886">
    <property type="term" value="C:plasma membrane"/>
    <property type="evidence" value="ECO:0000318"/>
    <property type="project" value="GO_Central"/>
</dbReference>
<dbReference type="GO" id="GO:0042803">
    <property type="term" value="F:protein homodimerization activity"/>
    <property type="evidence" value="ECO:0007669"/>
    <property type="project" value="Ensembl"/>
</dbReference>
<dbReference type="GO" id="GO:0007155">
    <property type="term" value="P:cell adhesion"/>
    <property type="evidence" value="ECO:0007669"/>
    <property type="project" value="UniProtKB-KW"/>
</dbReference>
<dbReference type="GO" id="GO:0050908">
    <property type="term" value="P:detection of light stimulus involved in visual perception"/>
    <property type="evidence" value="ECO:0007669"/>
    <property type="project" value="Ensembl"/>
</dbReference>
<dbReference type="GO" id="GO:0035845">
    <property type="term" value="P:photoreceptor cell outer segment organization"/>
    <property type="evidence" value="ECO:0007669"/>
    <property type="project" value="Ensembl"/>
</dbReference>
<dbReference type="GO" id="GO:0051291">
    <property type="term" value="P:protein heterooligomerization"/>
    <property type="evidence" value="ECO:0007669"/>
    <property type="project" value="Ensembl"/>
</dbReference>
<dbReference type="GO" id="GO:0051260">
    <property type="term" value="P:protein homooligomerization"/>
    <property type="evidence" value="ECO:0007669"/>
    <property type="project" value="Ensembl"/>
</dbReference>
<dbReference type="GO" id="GO:0072659">
    <property type="term" value="P:protein localization to plasma membrane"/>
    <property type="evidence" value="ECO:0000318"/>
    <property type="project" value="GO_Central"/>
</dbReference>
<dbReference type="GO" id="GO:0051604">
    <property type="term" value="P:protein maturation"/>
    <property type="evidence" value="ECO:0000318"/>
    <property type="project" value="GO_Central"/>
</dbReference>
<dbReference type="GO" id="GO:0060041">
    <property type="term" value="P:retina development in camera-type eye"/>
    <property type="evidence" value="ECO:0007669"/>
    <property type="project" value="Ensembl"/>
</dbReference>
<dbReference type="CDD" id="cd03162">
    <property type="entry name" value="peripherin_like_LEL"/>
    <property type="match status" value="1"/>
</dbReference>
<dbReference type="FunFam" id="1.10.1450.10:FF:000002">
    <property type="entry name" value="Retinal outer segment membrane protein 1"/>
    <property type="match status" value="1"/>
</dbReference>
<dbReference type="Gene3D" id="1.10.1450.10">
    <property type="entry name" value="Tetraspanin"/>
    <property type="match status" value="1"/>
</dbReference>
<dbReference type="InterPro" id="IPR000830">
    <property type="entry name" value="Peripherin/rom-1"/>
</dbReference>
<dbReference type="InterPro" id="IPR018498">
    <property type="entry name" value="Peripherin/rom-1_CS"/>
</dbReference>
<dbReference type="InterPro" id="IPR042026">
    <property type="entry name" value="Peripherin_LEL"/>
</dbReference>
<dbReference type="InterPro" id="IPR018499">
    <property type="entry name" value="Tetraspanin/Peripherin"/>
</dbReference>
<dbReference type="InterPro" id="IPR008952">
    <property type="entry name" value="Tetraspanin_EC2_sf"/>
</dbReference>
<dbReference type="PANTHER" id="PTHR19282:SF202">
    <property type="entry name" value="PERIPHERIN-2"/>
    <property type="match status" value="1"/>
</dbReference>
<dbReference type="PANTHER" id="PTHR19282">
    <property type="entry name" value="TETRASPANIN"/>
    <property type="match status" value="1"/>
</dbReference>
<dbReference type="Pfam" id="PF00335">
    <property type="entry name" value="Tetraspanin"/>
    <property type="match status" value="1"/>
</dbReference>
<dbReference type="PRINTS" id="PR00218">
    <property type="entry name" value="PERIPHERNRDS"/>
</dbReference>
<dbReference type="SUPFAM" id="SSF48652">
    <property type="entry name" value="Tetraspanin"/>
    <property type="match status" value="1"/>
</dbReference>
<dbReference type="PROSITE" id="PS00930">
    <property type="entry name" value="RDS_ROM1"/>
    <property type="match status" value="1"/>
</dbReference>
<gene>
    <name type="primary">PRPH2</name>
    <name type="synonym">RDS</name>
</gene>
<comment type="function">
    <text evidence="2">Essential for retina photoreceptor outer segment disk morphogenesis, may also play a role with ROM1 in the maintenance of outer segment disk structure (By similarity). Required for the maintenance of retinal outer nuclear layer thickness (By similarity). Required for the correct development and organization of the photoreceptor inner segment (By similarity).</text>
</comment>
<comment type="subunit">
    <text evidence="2 3">Homodimer; disulfide-linked (By similarity). Forms a homotetramer (By similarity). Forms a heterotetramer with ROM1 (By similarity). Homotetramer and heterotetramer core complexes go on to form higher order complexes by formation of intermolecular disulfide bonds (By similarity). Interacts with MREG (By similarity). Interacts with STX3 (By similarity). Interacts with SNAP25 (By similarity).</text>
</comment>
<comment type="subcellular location">
    <subcellularLocation>
        <location evidence="3">Membrane</location>
        <topology evidence="4">Multi-pass membrane protein</topology>
    </subcellularLocation>
    <subcellularLocation>
        <location evidence="2">Cell projection</location>
        <location evidence="2">Cilium</location>
        <location evidence="2">Photoreceptor outer segment</location>
    </subcellularLocation>
    <subcellularLocation>
        <location evidence="2">Photoreceptor inner segment</location>
    </subcellularLocation>
</comment>
<comment type="tissue specificity">
    <text>Retina (photoreceptor). In rim region of ROS (rod outer segment) disks.</text>
</comment>
<comment type="similarity">
    <text evidence="6">Belongs to the PRPH2/ROM1 family.</text>
</comment>
<evidence type="ECO:0000250" key="1"/>
<evidence type="ECO:0000250" key="2">
    <source>
        <dbReference type="UniProtKB" id="P15499"/>
    </source>
</evidence>
<evidence type="ECO:0000250" key="3">
    <source>
        <dbReference type="UniProtKB" id="P17810"/>
    </source>
</evidence>
<evidence type="ECO:0000255" key="4"/>
<evidence type="ECO:0000269" key="5">
    <source>
    </source>
</evidence>
<evidence type="ECO:0000305" key="6"/>
<proteinExistence type="evidence at transcript level"/>
<protein>
    <recommendedName>
        <fullName>Peripherin-2</fullName>
    </recommendedName>
    <alternativeName>
        <fullName>Retinal degeneration slow protein</fullName>
    </alternativeName>
</protein>
<keyword id="KW-0130">Cell adhesion</keyword>
<keyword id="KW-0966">Cell projection</keyword>
<keyword id="KW-1015">Disulfide bond</keyword>
<keyword id="KW-0325">Glycoprotein</keyword>
<keyword id="KW-0472">Membrane</keyword>
<keyword id="KW-1185">Reference proteome</keyword>
<keyword id="KW-0716">Sensory transduction</keyword>
<keyword id="KW-0812">Transmembrane</keyword>
<keyword id="KW-1133">Transmembrane helix</keyword>
<keyword id="KW-0844">Vision</keyword>